<feature type="chain" id="PRO_1000141365" description="Large ribosomal subunit protein uL1">
    <location>
        <begin position="1"/>
        <end position="224"/>
    </location>
</feature>
<proteinExistence type="inferred from homology"/>
<dbReference type="EMBL" id="CP000976">
    <property type="protein sequence ID" value="ACH93338.1"/>
    <property type="molecule type" value="Genomic_DNA"/>
</dbReference>
<dbReference type="RefSeq" id="WP_012538149.1">
    <property type="nucleotide sequence ID" value="NC_011229.1"/>
</dbReference>
<dbReference type="SMR" id="B5RLV2"/>
<dbReference type="STRING" id="412419.BDU_386"/>
<dbReference type="KEGG" id="bdu:BDU_386"/>
<dbReference type="eggNOG" id="COG0081">
    <property type="taxonomic scope" value="Bacteria"/>
</dbReference>
<dbReference type="HOGENOM" id="CLU_062853_0_0_12"/>
<dbReference type="OrthoDB" id="9803740at2"/>
<dbReference type="Proteomes" id="UP000000611">
    <property type="component" value="Chromosome"/>
</dbReference>
<dbReference type="GO" id="GO:0015934">
    <property type="term" value="C:large ribosomal subunit"/>
    <property type="evidence" value="ECO:0007669"/>
    <property type="project" value="InterPro"/>
</dbReference>
<dbReference type="GO" id="GO:0019843">
    <property type="term" value="F:rRNA binding"/>
    <property type="evidence" value="ECO:0007669"/>
    <property type="project" value="UniProtKB-UniRule"/>
</dbReference>
<dbReference type="GO" id="GO:0003735">
    <property type="term" value="F:structural constituent of ribosome"/>
    <property type="evidence" value="ECO:0007669"/>
    <property type="project" value="InterPro"/>
</dbReference>
<dbReference type="GO" id="GO:0000049">
    <property type="term" value="F:tRNA binding"/>
    <property type="evidence" value="ECO:0007669"/>
    <property type="project" value="UniProtKB-KW"/>
</dbReference>
<dbReference type="GO" id="GO:0006417">
    <property type="term" value="P:regulation of translation"/>
    <property type="evidence" value="ECO:0007669"/>
    <property type="project" value="UniProtKB-KW"/>
</dbReference>
<dbReference type="GO" id="GO:0006412">
    <property type="term" value="P:translation"/>
    <property type="evidence" value="ECO:0007669"/>
    <property type="project" value="UniProtKB-UniRule"/>
</dbReference>
<dbReference type="CDD" id="cd00403">
    <property type="entry name" value="Ribosomal_L1"/>
    <property type="match status" value="1"/>
</dbReference>
<dbReference type="FunFam" id="3.40.50.790:FF:000001">
    <property type="entry name" value="50S ribosomal protein L1"/>
    <property type="match status" value="1"/>
</dbReference>
<dbReference type="Gene3D" id="3.30.190.20">
    <property type="match status" value="1"/>
</dbReference>
<dbReference type="Gene3D" id="3.40.50.790">
    <property type="match status" value="1"/>
</dbReference>
<dbReference type="HAMAP" id="MF_01318_B">
    <property type="entry name" value="Ribosomal_uL1_B"/>
    <property type="match status" value="1"/>
</dbReference>
<dbReference type="InterPro" id="IPR005878">
    <property type="entry name" value="Ribosom_uL1_bac-type"/>
</dbReference>
<dbReference type="InterPro" id="IPR002143">
    <property type="entry name" value="Ribosomal_uL1"/>
</dbReference>
<dbReference type="InterPro" id="IPR023674">
    <property type="entry name" value="Ribosomal_uL1-like"/>
</dbReference>
<dbReference type="InterPro" id="IPR028364">
    <property type="entry name" value="Ribosomal_uL1/biogenesis"/>
</dbReference>
<dbReference type="InterPro" id="IPR016095">
    <property type="entry name" value="Ribosomal_uL1_3-a/b-sand"/>
</dbReference>
<dbReference type="InterPro" id="IPR023673">
    <property type="entry name" value="Ribosomal_uL1_CS"/>
</dbReference>
<dbReference type="NCBIfam" id="TIGR01169">
    <property type="entry name" value="rplA_bact"/>
    <property type="match status" value="1"/>
</dbReference>
<dbReference type="PANTHER" id="PTHR36427">
    <property type="entry name" value="54S RIBOSOMAL PROTEIN L1, MITOCHONDRIAL"/>
    <property type="match status" value="1"/>
</dbReference>
<dbReference type="PANTHER" id="PTHR36427:SF3">
    <property type="entry name" value="LARGE RIBOSOMAL SUBUNIT PROTEIN UL1M"/>
    <property type="match status" value="1"/>
</dbReference>
<dbReference type="Pfam" id="PF00687">
    <property type="entry name" value="Ribosomal_L1"/>
    <property type="match status" value="1"/>
</dbReference>
<dbReference type="PIRSF" id="PIRSF002155">
    <property type="entry name" value="Ribosomal_L1"/>
    <property type="match status" value="1"/>
</dbReference>
<dbReference type="SUPFAM" id="SSF56808">
    <property type="entry name" value="Ribosomal protein L1"/>
    <property type="match status" value="1"/>
</dbReference>
<dbReference type="PROSITE" id="PS01199">
    <property type="entry name" value="RIBOSOMAL_L1"/>
    <property type="match status" value="1"/>
</dbReference>
<comment type="function">
    <text evidence="1">Binds directly to 23S rRNA. The L1 stalk is quite mobile in the ribosome, and is involved in E site tRNA release.</text>
</comment>
<comment type="function">
    <text evidence="1">Protein L1 is also a translational repressor protein, it controls the translation of the L11 operon by binding to its mRNA.</text>
</comment>
<comment type="subunit">
    <text evidence="1">Part of the 50S ribosomal subunit.</text>
</comment>
<comment type="similarity">
    <text evidence="1">Belongs to the universal ribosomal protein uL1 family.</text>
</comment>
<accession>B5RLV2</accession>
<reference key="1">
    <citation type="journal article" date="2008" name="PLoS Genet.">
        <title>The genome of Borrelia recurrentis, the agent of deadly louse-borne relapsing fever, is a degraded subset of tick-borne Borrelia duttonii.</title>
        <authorList>
            <person name="Lescot M."/>
            <person name="Audic S."/>
            <person name="Robert C."/>
            <person name="Nguyen T.T."/>
            <person name="Blanc G."/>
            <person name="Cutler S.J."/>
            <person name="Wincker P."/>
            <person name="Couloux A."/>
            <person name="Claverie J.-M."/>
            <person name="Raoult D."/>
            <person name="Drancourt M."/>
        </authorList>
    </citation>
    <scope>NUCLEOTIDE SEQUENCE [LARGE SCALE GENOMIC DNA]</scope>
    <source>
        <strain>Ly</strain>
    </source>
</reference>
<sequence length="224" mass="25115">MAKSGKKYLQALSKVNKLKSYNIDDAISLLKEIKFVKFDETIDVSVNLNLKKNHTVRETLVLPHQFMKEKRILVFAKGEKAEEAREFGAAYVGDDDLINKIKDGFSDFDVVVATPDMMKDVGKLGPILGKRGLMPNPKTQTITNDLKGTIASLKKGRTEFRANKNGVINFSVGKSSMDSKKIRENYDEFIKELLKRRPSDLKGTFVDSVYVSSTMGPSVKIDFV</sequence>
<keyword id="KW-0678">Repressor</keyword>
<keyword id="KW-0687">Ribonucleoprotein</keyword>
<keyword id="KW-0689">Ribosomal protein</keyword>
<keyword id="KW-0694">RNA-binding</keyword>
<keyword id="KW-0699">rRNA-binding</keyword>
<keyword id="KW-0810">Translation regulation</keyword>
<keyword id="KW-0820">tRNA-binding</keyword>
<name>RL1_BORDL</name>
<organism>
    <name type="scientific">Borrelia duttonii (strain Ly)</name>
    <dbReference type="NCBI Taxonomy" id="412419"/>
    <lineage>
        <taxon>Bacteria</taxon>
        <taxon>Pseudomonadati</taxon>
        <taxon>Spirochaetota</taxon>
        <taxon>Spirochaetia</taxon>
        <taxon>Spirochaetales</taxon>
        <taxon>Borreliaceae</taxon>
        <taxon>Borrelia</taxon>
    </lineage>
</organism>
<evidence type="ECO:0000255" key="1">
    <source>
        <dbReference type="HAMAP-Rule" id="MF_01318"/>
    </source>
</evidence>
<evidence type="ECO:0000305" key="2"/>
<gene>
    <name evidence="1" type="primary">rplA</name>
    <name type="ordered locus">BDU_386</name>
</gene>
<protein>
    <recommendedName>
        <fullName evidence="1">Large ribosomal subunit protein uL1</fullName>
    </recommendedName>
    <alternativeName>
        <fullName evidence="2">50S ribosomal protein L1</fullName>
    </alternativeName>
</protein>